<proteinExistence type="inferred from homology"/>
<name>PURT_BACTN</name>
<feature type="chain" id="PRO_0000319126" description="Formate-dependent phosphoribosylglycinamide formyltransferase">
    <location>
        <begin position="1"/>
        <end position="388"/>
    </location>
</feature>
<feature type="domain" description="ATP-grasp" evidence="1">
    <location>
        <begin position="108"/>
        <end position="300"/>
    </location>
</feature>
<feature type="binding site" evidence="1">
    <location>
        <begin position="11"/>
        <end position="12"/>
    </location>
    <ligand>
        <name>N(1)-(5-phospho-beta-D-ribosyl)glycinamide</name>
        <dbReference type="ChEBI" id="CHEBI:143788"/>
    </ligand>
</feature>
<feature type="binding site" evidence="1">
    <location>
        <position position="71"/>
    </location>
    <ligand>
        <name>N(1)-(5-phospho-beta-D-ribosyl)glycinamide</name>
        <dbReference type="ChEBI" id="CHEBI:143788"/>
    </ligand>
</feature>
<feature type="binding site" evidence="1">
    <location>
        <position position="103"/>
    </location>
    <ligand>
        <name>ATP</name>
        <dbReference type="ChEBI" id="CHEBI:30616"/>
    </ligand>
</feature>
<feature type="binding site" evidence="1">
    <location>
        <position position="144"/>
    </location>
    <ligand>
        <name>ATP</name>
        <dbReference type="ChEBI" id="CHEBI:30616"/>
    </ligand>
</feature>
<feature type="binding site" evidence="1">
    <location>
        <begin position="149"/>
        <end position="154"/>
    </location>
    <ligand>
        <name>ATP</name>
        <dbReference type="ChEBI" id="CHEBI:30616"/>
    </ligand>
</feature>
<feature type="binding site" evidence="1">
    <location>
        <begin position="184"/>
        <end position="187"/>
    </location>
    <ligand>
        <name>ATP</name>
        <dbReference type="ChEBI" id="CHEBI:30616"/>
    </ligand>
</feature>
<feature type="binding site" evidence="1">
    <location>
        <position position="192"/>
    </location>
    <ligand>
        <name>ATP</name>
        <dbReference type="ChEBI" id="CHEBI:30616"/>
    </ligand>
</feature>
<feature type="binding site" evidence="1">
    <location>
        <position position="257"/>
    </location>
    <ligand>
        <name>Mg(2+)</name>
        <dbReference type="ChEBI" id="CHEBI:18420"/>
    </ligand>
</feature>
<feature type="binding site" evidence="1">
    <location>
        <position position="270"/>
    </location>
    <ligand>
        <name>Mg(2+)</name>
        <dbReference type="ChEBI" id="CHEBI:18420"/>
    </ligand>
</feature>
<feature type="binding site" evidence="1">
    <location>
        <position position="277"/>
    </location>
    <ligand>
        <name>N(1)-(5-phospho-beta-D-ribosyl)glycinamide</name>
        <dbReference type="ChEBI" id="CHEBI:143788"/>
    </ligand>
</feature>
<feature type="binding site" evidence="1">
    <location>
        <position position="349"/>
    </location>
    <ligand>
        <name>N(1)-(5-phospho-beta-D-ribosyl)glycinamide</name>
        <dbReference type="ChEBI" id="CHEBI:143788"/>
    </ligand>
</feature>
<feature type="binding site" evidence="1">
    <location>
        <begin position="356"/>
        <end position="357"/>
    </location>
    <ligand>
        <name>N(1)-(5-phospho-beta-D-ribosyl)glycinamide</name>
        <dbReference type="ChEBI" id="CHEBI:143788"/>
    </ligand>
</feature>
<accession>Q8A9W1</accession>
<sequence>MKKILLLGSGELGKEFVISAQRKGQHVIACDSYAGAPAMQVADEFEVFDMLDGEALERVVEKHHPDIIVPEIEAIRTERLYDFEKEGIQVVPSARAVNFTMNRKAIRDLAAKELGLKTANYFYAKTLDELKEAAAKIGFPCVVKPLMSSSGKGQSLVKSADELEHAWEYGCSGSRGDIRELIIEEFIKFDSEITLLTVTQKNGPTLFCPPIGHVQKGGDYRESFQPAHIDPAHLKEAEEMAEKVTRALTGAGLWGVEFFLSHENGVYFSELSPRPHDTGMVTLAGTQNLNEFELHLRAVLGLPIPGIKQERIGASAVILSPIASQERPQYRGMEEVTKEEDTYLRIFGKPFTRVNRRMGVVLCYAPLNSDLDALRDKAKRIAEKVEVY</sequence>
<keyword id="KW-0067">ATP-binding</keyword>
<keyword id="KW-0436">Ligase</keyword>
<keyword id="KW-0460">Magnesium</keyword>
<keyword id="KW-0479">Metal-binding</keyword>
<keyword id="KW-0547">Nucleotide-binding</keyword>
<keyword id="KW-0658">Purine biosynthesis</keyword>
<keyword id="KW-1185">Reference proteome</keyword>
<evidence type="ECO:0000255" key="1">
    <source>
        <dbReference type="HAMAP-Rule" id="MF_01643"/>
    </source>
</evidence>
<organism>
    <name type="scientific">Bacteroides thetaiotaomicron (strain ATCC 29148 / DSM 2079 / JCM 5827 / CCUG 10774 / NCTC 10582 / VPI-5482 / E50)</name>
    <dbReference type="NCBI Taxonomy" id="226186"/>
    <lineage>
        <taxon>Bacteria</taxon>
        <taxon>Pseudomonadati</taxon>
        <taxon>Bacteroidota</taxon>
        <taxon>Bacteroidia</taxon>
        <taxon>Bacteroidales</taxon>
        <taxon>Bacteroidaceae</taxon>
        <taxon>Bacteroides</taxon>
    </lineage>
</organism>
<gene>
    <name evidence="1" type="primary">purT</name>
    <name type="ordered locus">BT_0704</name>
</gene>
<protein>
    <recommendedName>
        <fullName evidence="1">Formate-dependent phosphoribosylglycinamide formyltransferase</fullName>
        <ecNumber evidence="1">6.3.1.21</ecNumber>
    </recommendedName>
    <alternativeName>
        <fullName evidence="1">5'-phosphoribosylglycinamide transformylase 2</fullName>
    </alternativeName>
    <alternativeName>
        <fullName evidence="1">Formate-dependent GAR transformylase</fullName>
    </alternativeName>
    <alternativeName>
        <fullName evidence="1">GAR transformylase 2</fullName>
        <shortName evidence="1">GART 2</shortName>
    </alternativeName>
    <alternativeName>
        <fullName evidence="1">Non-folate glycinamide ribonucleotide transformylase</fullName>
    </alternativeName>
    <alternativeName>
        <fullName evidence="1">Phosphoribosylglycinamide formyltransferase 2</fullName>
    </alternativeName>
</protein>
<comment type="function">
    <text evidence="1">Involved in the de novo purine biosynthesis. Catalyzes the transfer of formate to 5-phospho-ribosyl-glycinamide (GAR), producing 5-phospho-ribosyl-N-formylglycinamide (FGAR). Formate is provided by PurU via hydrolysis of 10-formyl-tetrahydrofolate.</text>
</comment>
<comment type="catalytic activity">
    <reaction evidence="1">
        <text>N(1)-(5-phospho-beta-D-ribosyl)glycinamide + formate + ATP = N(2)-formyl-N(1)-(5-phospho-beta-D-ribosyl)glycinamide + ADP + phosphate + H(+)</text>
        <dbReference type="Rhea" id="RHEA:24829"/>
        <dbReference type="ChEBI" id="CHEBI:15378"/>
        <dbReference type="ChEBI" id="CHEBI:15740"/>
        <dbReference type="ChEBI" id="CHEBI:30616"/>
        <dbReference type="ChEBI" id="CHEBI:43474"/>
        <dbReference type="ChEBI" id="CHEBI:143788"/>
        <dbReference type="ChEBI" id="CHEBI:147286"/>
        <dbReference type="ChEBI" id="CHEBI:456216"/>
        <dbReference type="EC" id="6.3.1.21"/>
    </reaction>
    <physiologicalReaction direction="left-to-right" evidence="1">
        <dbReference type="Rhea" id="RHEA:24830"/>
    </physiologicalReaction>
</comment>
<comment type="pathway">
    <text evidence="1">Purine metabolism; IMP biosynthesis via de novo pathway; N(2)-formyl-N(1)-(5-phospho-D-ribosyl)glycinamide from N(1)-(5-phospho-D-ribosyl)glycinamide (formate route): step 1/1.</text>
</comment>
<comment type="subunit">
    <text evidence="1">Homodimer.</text>
</comment>
<comment type="similarity">
    <text evidence="1">Belongs to the PurK/PurT family.</text>
</comment>
<dbReference type="EC" id="6.3.1.21" evidence="1"/>
<dbReference type="EMBL" id="AE015928">
    <property type="protein sequence ID" value="AAO75811.1"/>
    <property type="molecule type" value="Genomic_DNA"/>
</dbReference>
<dbReference type="RefSeq" id="NP_809617.1">
    <property type="nucleotide sequence ID" value="NC_004663.1"/>
</dbReference>
<dbReference type="RefSeq" id="WP_008765582.1">
    <property type="nucleotide sequence ID" value="NZ_UYXG01000002.1"/>
</dbReference>
<dbReference type="SMR" id="Q8A9W1"/>
<dbReference type="FunCoup" id="Q8A9W1">
    <property type="interactions" value="94"/>
</dbReference>
<dbReference type="STRING" id="226186.BT_0704"/>
<dbReference type="PaxDb" id="226186-BT_0704"/>
<dbReference type="EnsemblBacteria" id="AAO75811">
    <property type="protein sequence ID" value="AAO75811"/>
    <property type="gene ID" value="BT_0704"/>
</dbReference>
<dbReference type="GeneID" id="60926672"/>
<dbReference type="KEGG" id="bth:BT_0704"/>
<dbReference type="PATRIC" id="fig|226186.12.peg.719"/>
<dbReference type="eggNOG" id="COG0027">
    <property type="taxonomic scope" value="Bacteria"/>
</dbReference>
<dbReference type="HOGENOM" id="CLU_011534_1_3_10"/>
<dbReference type="InParanoid" id="Q8A9W1"/>
<dbReference type="OrthoDB" id="9804625at2"/>
<dbReference type="UniPathway" id="UPA00074">
    <property type="reaction ID" value="UER00127"/>
</dbReference>
<dbReference type="Proteomes" id="UP000001414">
    <property type="component" value="Chromosome"/>
</dbReference>
<dbReference type="GO" id="GO:0005829">
    <property type="term" value="C:cytosol"/>
    <property type="evidence" value="ECO:0000318"/>
    <property type="project" value="GO_Central"/>
</dbReference>
<dbReference type="GO" id="GO:0005524">
    <property type="term" value="F:ATP binding"/>
    <property type="evidence" value="ECO:0007669"/>
    <property type="project" value="UniProtKB-UniRule"/>
</dbReference>
<dbReference type="GO" id="GO:0000287">
    <property type="term" value="F:magnesium ion binding"/>
    <property type="evidence" value="ECO:0007669"/>
    <property type="project" value="InterPro"/>
</dbReference>
<dbReference type="GO" id="GO:0043815">
    <property type="term" value="F:phosphoribosylglycinamide formyltransferase 2 activity"/>
    <property type="evidence" value="ECO:0007669"/>
    <property type="project" value="UniProtKB-UniRule"/>
</dbReference>
<dbReference type="GO" id="GO:0004644">
    <property type="term" value="F:phosphoribosylglycinamide formyltransferase activity"/>
    <property type="evidence" value="ECO:0007669"/>
    <property type="project" value="InterPro"/>
</dbReference>
<dbReference type="GO" id="GO:0006189">
    <property type="term" value="P:'de novo' IMP biosynthetic process"/>
    <property type="evidence" value="ECO:0007669"/>
    <property type="project" value="UniProtKB-UniRule"/>
</dbReference>
<dbReference type="FunFam" id="3.30.1490.20:FF:000013">
    <property type="entry name" value="Formate-dependent phosphoribosylglycinamide formyltransferase"/>
    <property type="match status" value="1"/>
</dbReference>
<dbReference type="FunFam" id="3.30.470.20:FF:000035">
    <property type="entry name" value="Formate-dependent phosphoribosylglycinamide formyltransferase"/>
    <property type="match status" value="1"/>
</dbReference>
<dbReference type="FunFam" id="3.40.50.20:FF:000022">
    <property type="entry name" value="Formate-dependent phosphoribosylglycinamide formyltransferase"/>
    <property type="match status" value="1"/>
</dbReference>
<dbReference type="Gene3D" id="3.40.50.20">
    <property type="match status" value="1"/>
</dbReference>
<dbReference type="Gene3D" id="3.30.1490.20">
    <property type="entry name" value="ATP-grasp fold, A domain"/>
    <property type="match status" value="1"/>
</dbReference>
<dbReference type="Gene3D" id="3.30.470.20">
    <property type="entry name" value="ATP-grasp fold, B domain"/>
    <property type="match status" value="1"/>
</dbReference>
<dbReference type="HAMAP" id="MF_01643">
    <property type="entry name" value="PurT"/>
    <property type="match status" value="1"/>
</dbReference>
<dbReference type="InterPro" id="IPR011761">
    <property type="entry name" value="ATP-grasp"/>
</dbReference>
<dbReference type="InterPro" id="IPR003135">
    <property type="entry name" value="ATP-grasp_carboxylate-amine"/>
</dbReference>
<dbReference type="InterPro" id="IPR013815">
    <property type="entry name" value="ATP_grasp_subdomain_1"/>
</dbReference>
<dbReference type="InterPro" id="IPR016185">
    <property type="entry name" value="PreATP-grasp_dom_sf"/>
</dbReference>
<dbReference type="InterPro" id="IPR005862">
    <property type="entry name" value="PurT"/>
</dbReference>
<dbReference type="InterPro" id="IPR054350">
    <property type="entry name" value="PurT/PurK_preATP-grasp"/>
</dbReference>
<dbReference type="InterPro" id="IPR048740">
    <property type="entry name" value="PurT_C"/>
</dbReference>
<dbReference type="InterPro" id="IPR011054">
    <property type="entry name" value="Rudment_hybrid_motif"/>
</dbReference>
<dbReference type="NCBIfam" id="NF006766">
    <property type="entry name" value="PRK09288.1"/>
    <property type="match status" value="1"/>
</dbReference>
<dbReference type="NCBIfam" id="TIGR01142">
    <property type="entry name" value="purT"/>
    <property type="match status" value="1"/>
</dbReference>
<dbReference type="PANTHER" id="PTHR43055">
    <property type="entry name" value="FORMATE-DEPENDENT PHOSPHORIBOSYLGLYCINAMIDE FORMYLTRANSFERASE"/>
    <property type="match status" value="1"/>
</dbReference>
<dbReference type="PANTHER" id="PTHR43055:SF1">
    <property type="entry name" value="FORMATE-DEPENDENT PHOSPHORIBOSYLGLYCINAMIDE FORMYLTRANSFERASE"/>
    <property type="match status" value="1"/>
</dbReference>
<dbReference type="Pfam" id="PF02222">
    <property type="entry name" value="ATP-grasp"/>
    <property type="match status" value="1"/>
</dbReference>
<dbReference type="Pfam" id="PF21244">
    <property type="entry name" value="PurT_C"/>
    <property type="match status" value="1"/>
</dbReference>
<dbReference type="Pfam" id="PF22660">
    <property type="entry name" value="RS_preATP-grasp-like"/>
    <property type="match status" value="1"/>
</dbReference>
<dbReference type="SUPFAM" id="SSF56059">
    <property type="entry name" value="Glutathione synthetase ATP-binding domain-like"/>
    <property type="match status" value="1"/>
</dbReference>
<dbReference type="SUPFAM" id="SSF52440">
    <property type="entry name" value="PreATP-grasp domain"/>
    <property type="match status" value="1"/>
</dbReference>
<dbReference type="SUPFAM" id="SSF51246">
    <property type="entry name" value="Rudiment single hybrid motif"/>
    <property type="match status" value="1"/>
</dbReference>
<dbReference type="PROSITE" id="PS50975">
    <property type="entry name" value="ATP_GRASP"/>
    <property type="match status" value="1"/>
</dbReference>
<reference key="1">
    <citation type="journal article" date="2003" name="Science">
        <title>A genomic view of the human-Bacteroides thetaiotaomicron symbiosis.</title>
        <authorList>
            <person name="Xu J."/>
            <person name="Bjursell M.K."/>
            <person name="Himrod J."/>
            <person name="Deng S."/>
            <person name="Carmichael L.K."/>
            <person name="Chiang H.C."/>
            <person name="Hooper L.V."/>
            <person name="Gordon J.I."/>
        </authorList>
    </citation>
    <scope>NUCLEOTIDE SEQUENCE [LARGE SCALE GENOMIC DNA]</scope>
    <source>
        <strain>ATCC 29148 / DSM 2079 / JCM 5827 / CCUG 10774 / NCTC 10582 / VPI-5482 / E50</strain>
    </source>
</reference>